<protein>
    <recommendedName>
        <fullName evidence="1">Triosephosphate isomerase</fullName>
        <shortName evidence="1">TIM</shortName>
        <shortName evidence="1">TPI</shortName>
        <ecNumber evidence="1">5.3.1.1</ecNumber>
    </recommendedName>
    <alternativeName>
        <fullName evidence="1">Triose-phosphate isomerase</fullName>
    </alternativeName>
</protein>
<accession>P68824</accession>
<accession>Q9Z5C3</accession>
<name>TPIS_STAAW</name>
<reference key="1">
    <citation type="journal article" date="2002" name="Lancet">
        <title>Genome and virulence determinants of high virulence community-acquired MRSA.</title>
        <authorList>
            <person name="Baba T."/>
            <person name="Takeuchi F."/>
            <person name="Kuroda M."/>
            <person name="Yuzawa H."/>
            <person name="Aoki K."/>
            <person name="Oguchi A."/>
            <person name="Nagai Y."/>
            <person name="Iwama N."/>
            <person name="Asano K."/>
            <person name="Naimi T."/>
            <person name="Kuroda H."/>
            <person name="Cui L."/>
            <person name="Yamamoto K."/>
            <person name="Hiramatsu K."/>
        </authorList>
    </citation>
    <scope>NUCLEOTIDE SEQUENCE [LARGE SCALE GENOMIC DNA]</scope>
    <source>
        <strain>MW2</strain>
    </source>
</reference>
<feature type="chain" id="PRO_0000090289" description="Triosephosphate isomerase">
    <location>
        <begin position="1"/>
        <end position="253"/>
    </location>
</feature>
<feature type="active site" description="Electrophile" evidence="1">
    <location>
        <position position="97"/>
    </location>
</feature>
<feature type="active site" description="Proton acceptor" evidence="1">
    <location>
        <position position="169"/>
    </location>
</feature>
<feature type="binding site" evidence="1">
    <location>
        <begin position="9"/>
        <end position="11"/>
    </location>
    <ligand>
        <name>substrate</name>
    </ligand>
</feature>
<feature type="binding site" evidence="1">
    <location>
        <position position="175"/>
    </location>
    <ligand>
        <name>substrate</name>
    </ligand>
</feature>
<feature type="binding site" evidence="1">
    <location>
        <position position="215"/>
    </location>
    <ligand>
        <name>substrate</name>
    </ligand>
</feature>
<feature type="binding site" evidence="1">
    <location>
        <begin position="236"/>
        <end position="237"/>
    </location>
    <ligand>
        <name>substrate</name>
    </ligand>
</feature>
<comment type="function">
    <text evidence="1">Involved in the gluconeogenesis. Catalyzes stereospecifically the conversion of dihydroxyacetone phosphate (DHAP) to D-glyceraldehyde-3-phosphate (G3P).</text>
</comment>
<comment type="catalytic activity">
    <reaction evidence="1">
        <text>D-glyceraldehyde 3-phosphate = dihydroxyacetone phosphate</text>
        <dbReference type="Rhea" id="RHEA:18585"/>
        <dbReference type="ChEBI" id="CHEBI:57642"/>
        <dbReference type="ChEBI" id="CHEBI:59776"/>
        <dbReference type="EC" id="5.3.1.1"/>
    </reaction>
</comment>
<comment type="pathway">
    <text evidence="1">Carbohydrate biosynthesis; gluconeogenesis.</text>
</comment>
<comment type="pathway">
    <text evidence="1">Carbohydrate degradation; glycolysis; D-glyceraldehyde 3-phosphate from glycerone phosphate: step 1/1.</text>
</comment>
<comment type="subunit">
    <text evidence="1">Homodimer.</text>
</comment>
<comment type="subcellular location">
    <subcellularLocation>
        <location evidence="1">Cytoplasm</location>
    </subcellularLocation>
</comment>
<comment type="similarity">
    <text evidence="1">Belongs to the triosephosphate isomerase family.</text>
</comment>
<gene>
    <name evidence="1" type="primary">tpiA</name>
    <name type="synonym">tpi</name>
    <name type="ordered locus">MW0736</name>
</gene>
<keyword id="KW-0963">Cytoplasm</keyword>
<keyword id="KW-0312">Gluconeogenesis</keyword>
<keyword id="KW-0324">Glycolysis</keyword>
<keyword id="KW-0413">Isomerase</keyword>
<proteinExistence type="inferred from homology"/>
<evidence type="ECO:0000255" key="1">
    <source>
        <dbReference type="HAMAP-Rule" id="MF_00147"/>
    </source>
</evidence>
<organism>
    <name type="scientific">Staphylococcus aureus (strain MW2)</name>
    <dbReference type="NCBI Taxonomy" id="196620"/>
    <lineage>
        <taxon>Bacteria</taxon>
        <taxon>Bacillati</taxon>
        <taxon>Bacillota</taxon>
        <taxon>Bacilli</taxon>
        <taxon>Bacillales</taxon>
        <taxon>Staphylococcaceae</taxon>
        <taxon>Staphylococcus</taxon>
    </lineage>
</organism>
<dbReference type="EC" id="5.3.1.1" evidence="1"/>
<dbReference type="EMBL" id="BA000033">
    <property type="protein sequence ID" value="BAB94601.1"/>
    <property type="molecule type" value="Genomic_DNA"/>
</dbReference>
<dbReference type="RefSeq" id="WP_001260089.1">
    <property type="nucleotide sequence ID" value="NC_003923.1"/>
</dbReference>
<dbReference type="SMR" id="P68824"/>
<dbReference type="KEGG" id="sam:MW0736"/>
<dbReference type="HOGENOM" id="CLU_024251_2_3_9"/>
<dbReference type="UniPathway" id="UPA00109">
    <property type="reaction ID" value="UER00189"/>
</dbReference>
<dbReference type="UniPathway" id="UPA00138"/>
<dbReference type="GO" id="GO:0005829">
    <property type="term" value="C:cytosol"/>
    <property type="evidence" value="ECO:0007669"/>
    <property type="project" value="TreeGrafter"/>
</dbReference>
<dbReference type="GO" id="GO:0004807">
    <property type="term" value="F:triose-phosphate isomerase activity"/>
    <property type="evidence" value="ECO:0007669"/>
    <property type="project" value="UniProtKB-UniRule"/>
</dbReference>
<dbReference type="GO" id="GO:0006094">
    <property type="term" value="P:gluconeogenesis"/>
    <property type="evidence" value="ECO:0007669"/>
    <property type="project" value="UniProtKB-UniRule"/>
</dbReference>
<dbReference type="GO" id="GO:0046166">
    <property type="term" value="P:glyceraldehyde-3-phosphate biosynthetic process"/>
    <property type="evidence" value="ECO:0007669"/>
    <property type="project" value="TreeGrafter"/>
</dbReference>
<dbReference type="GO" id="GO:0019563">
    <property type="term" value="P:glycerol catabolic process"/>
    <property type="evidence" value="ECO:0007669"/>
    <property type="project" value="TreeGrafter"/>
</dbReference>
<dbReference type="GO" id="GO:0006096">
    <property type="term" value="P:glycolytic process"/>
    <property type="evidence" value="ECO:0007669"/>
    <property type="project" value="UniProtKB-UniRule"/>
</dbReference>
<dbReference type="CDD" id="cd00311">
    <property type="entry name" value="TIM"/>
    <property type="match status" value="1"/>
</dbReference>
<dbReference type="FunFam" id="3.20.20.70:FF:000016">
    <property type="entry name" value="Triosephosphate isomerase"/>
    <property type="match status" value="1"/>
</dbReference>
<dbReference type="Gene3D" id="3.20.20.70">
    <property type="entry name" value="Aldolase class I"/>
    <property type="match status" value="1"/>
</dbReference>
<dbReference type="HAMAP" id="MF_00147_B">
    <property type="entry name" value="TIM_B"/>
    <property type="match status" value="1"/>
</dbReference>
<dbReference type="InterPro" id="IPR013785">
    <property type="entry name" value="Aldolase_TIM"/>
</dbReference>
<dbReference type="InterPro" id="IPR035990">
    <property type="entry name" value="TIM_sf"/>
</dbReference>
<dbReference type="InterPro" id="IPR022896">
    <property type="entry name" value="TrioseP_Isoase_bac/euk"/>
</dbReference>
<dbReference type="InterPro" id="IPR000652">
    <property type="entry name" value="Triosephosphate_isomerase"/>
</dbReference>
<dbReference type="InterPro" id="IPR020861">
    <property type="entry name" value="Triosephosphate_isomerase_AS"/>
</dbReference>
<dbReference type="NCBIfam" id="TIGR00419">
    <property type="entry name" value="tim"/>
    <property type="match status" value="1"/>
</dbReference>
<dbReference type="PANTHER" id="PTHR21139">
    <property type="entry name" value="TRIOSEPHOSPHATE ISOMERASE"/>
    <property type="match status" value="1"/>
</dbReference>
<dbReference type="PANTHER" id="PTHR21139:SF42">
    <property type="entry name" value="TRIOSEPHOSPHATE ISOMERASE"/>
    <property type="match status" value="1"/>
</dbReference>
<dbReference type="Pfam" id="PF00121">
    <property type="entry name" value="TIM"/>
    <property type="match status" value="1"/>
</dbReference>
<dbReference type="SUPFAM" id="SSF51351">
    <property type="entry name" value="Triosephosphate isomerase (TIM)"/>
    <property type="match status" value="1"/>
</dbReference>
<dbReference type="PROSITE" id="PS00171">
    <property type="entry name" value="TIM_1"/>
    <property type="match status" value="1"/>
</dbReference>
<dbReference type="PROSITE" id="PS51440">
    <property type="entry name" value="TIM_2"/>
    <property type="match status" value="1"/>
</dbReference>
<sequence length="253" mass="27262">MRTPIIAGNWKMNKTVQEAKDFVNALPTLPDSKEVESVICAPAIQLDALTTAVKEGKAQGLEIGAQNTYFEDNGAFTGETSPVALADLGVKYVVIGHSERRELFHETDEEINKKAHAIFKHGMTPIICVGETDEERESGKANDVVGEQVKKAVAGLSEDQLKSVVIAYEPIWAIGTGKSSTSEDANEMCAFVRQTIADLSSKEVSEATRIQYGGSVKPNNIKEYMAQTDIDGALVGGASLKVEDFVQLLEGAK</sequence>